<protein>
    <recommendedName>
        <fullName evidence="1">2-succinyl-5-enolpyruvyl-6-hydroxy-3-cyclohexene-1-carboxylate synthase</fullName>
        <shortName evidence="1">SEPHCHC synthase</shortName>
        <ecNumber evidence="1">2.2.1.9</ecNumber>
    </recommendedName>
    <alternativeName>
        <fullName evidence="1">Menaquinone biosynthesis protein MenD</fullName>
    </alternativeName>
</protein>
<dbReference type="EC" id="2.2.1.9" evidence="1"/>
<dbReference type="EMBL" id="AE005176">
    <property type="protein sequence ID" value="AAK04829.1"/>
    <property type="molecule type" value="Genomic_DNA"/>
</dbReference>
<dbReference type="PIR" id="C86716">
    <property type="entry name" value="C86716"/>
</dbReference>
<dbReference type="RefSeq" id="NP_266887.1">
    <property type="nucleotide sequence ID" value="NC_002662.1"/>
</dbReference>
<dbReference type="RefSeq" id="WP_010905535.1">
    <property type="nucleotide sequence ID" value="NC_002662.1"/>
</dbReference>
<dbReference type="SMR" id="Q9CHK0"/>
<dbReference type="PaxDb" id="272623-L0169"/>
<dbReference type="EnsemblBacteria" id="AAK04829">
    <property type="protein sequence ID" value="AAK04829"/>
    <property type="gene ID" value="L0169"/>
</dbReference>
<dbReference type="KEGG" id="lla:L0169"/>
<dbReference type="PATRIC" id="fig|272623.7.peg.785"/>
<dbReference type="eggNOG" id="COG1165">
    <property type="taxonomic scope" value="Bacteria"/>
</dbReference>
<dbReference type="HOGENOM" id="CLU_006051_3_0_9"/>
<dbReference type="OrthoDB" id="9791859at2"/>
<dbReference type="UniPathway" id="UPA00079"/>
<dbReference type="UniPathway" id="UPA01057">
    <property type="reaction ID" value="UER00164"/>
</dbReference>
<dbReference type="Proteomes" id="UP000002196">
    <property type="component" value="Chromosome"/>
</dbReference>
<dbReference type="GO" id="GO:0070204">
    <property type="term" value="F:2-succinyl-5-enolpyruvyl-6-hydroxy-3-cyclohexene-1-carboxylic-acid synthase activity"/>
    <property type="evidence" value="ECO:0007669"/>
    <property type="project" value="UniProtKB-UniRule"/>
</dbReference>
<dbReference type="GO" id="GO:0000287">
    <property type="term" value="F:magnesium ion binding"/>
    <property type="evidence" value="ECO:0007669"/>
    <property type="project" value="UniProtKB-UniRule"/>
</dbReference>
<dbReference type="GO" id="GO:0030145">
    <property type="term" value="F:manganese ion binding"/>
    <property type="evidence" value="ECO:0007669"/>
    <property type="project" value="UniProtKB-UniRule"/>
</dbReference>
<dbReference type="GO" id="GO:0030976">
    <property type="term" value="F:thiamine pyrophosphate binding"/>
    <property type="evidence" value="ECO:0007669"/>
    <property type="project" value="UniProtKB-UniRule"/>
</dbReference>
<dbReference type="GO" id="GO:0009234">
    <property type="term" value="P:menaquinone biosynthetic process"/>
    <property type="evidence" value="ECO:0007669"/>
    <property type="project" value="UniProtKB-UniRule"/>
</dbReference>
<dbReference type="CDD" id="cd07037">
    <property type="entry name" value="TPP_PYR_MenD"/>
    <property type="match status" value="1"/>
</dbReference>
<dbReference type="CDD" id="cd02009">
    <property type="entry name" value="TPP_SHCHC_synthase"/>
    <property type="match status" value="1"/>
</dbReference>
<dbReference type="Gene3D" id="3.40.50.970">
    <property type="match status" value="2"/>
</dbReference>
<dbReference type="Gene3D" id="3.40.50.1220">
    <property type="entry name" value="TPP-binding domain"/>
    <property type="match status" value="1"/>
</dbReference>
<dbReference type="HAMAP" id="MF_01659">
    <property type="entry name" value="MenD"/>
    <property type="match status" value="1"/>
</dbReference>
<dbReference type="InterPro" id="IPR029035">
    <property type="entry name" value="DHS-like_NAD/FAD-binding_dom"/>
</dbReference>
<dbReference type="InterPro" id="IPR004433">
    <property type="entry name" value="MenaQ_synth_MenD"/>
</dbReference>
<dbReference type="InterPro" id="IPR032264">
    <property type="entry name" value="MenD_middle"/>
</dbReference>
<dbReference type="InterPro" id="IPR029061">
    <property type="entry name" value="THDP-binding"/>
</dbReference>
<dbReference type="InterPro" id="IPR012001">
    <property type="entry name" value="Thiamin_PyroP_enz_TPP-bd_dom"/>
</dbReference>
<dbReference type="InterPro" id="IPR011766">
    <property type="entry name" value="TPP_enzyme_TPP-bd"/>
</dbReference>
<dbReference type="NCBIfam" id="TIGR00173">
    <property type="entry name" value="menD"/>
    <property type="match status" value="1"/>
</dbReference>
<dbReference type="PANTHER" id="PTHR42916">
    <property type="entry name" value="2-SUCCINYL-5-ENOLPYRUVYL-6-HYDROXY-3-CYCLOHEXENE-1-CARBOXYLATE SYNTHASE"/>
    <property type="match status" value="1"/>
</dbReference>
<dbReference type="PANTHER" id="PTHR42916:SF1">
    <property type="entry name" value="PROTEIN PHYLLO, CHLOROPLASTIC"/>
    <property type="match status" value="1"/>
</dbReference>
<dbReference type="Pfam" id="PF02775">
    <property type="entry name" value="TPP_enzyme_C"/>
    <property type="match status" value="1"/>
</dbReference>
<dbReference type="Pfam" id="PF16582">
    <property type="entry name" value="TPP_enzyme_M_2"/>
    <property type="match status" value="1"/>
</dbReference>
<dbReference type="Pfam" id="PF02776">
    <property type="entry name" value="TPP_enzyme_N"/>
    <property type="match status" value="1"/>
</dbReference>
<dbReference type="PIRSF" id="PIRSF004983">
    <property type="entry name" value="MenD"/>
    <property type="match status" value="1"/>
</dbReference>
<dbReference type="SUPFAM" id="SSF52467">
    <property type="entry name" value="DHS-like NAD/FAD-binding domain"/>
    <property type="match status" value="1"/>
</dbReference>
<dbReference type="SUPFAM" id="SSF52518">
    <property type="entry name" value="Thiamin diphosphate-binding fold (THDP-binding)"/>
    <property type="match status" value="2"/>
</dbReference>
<keyword id="KW-0460">Magnesium</keyword>
<keyword id="KW-0464">Manganese</keyword>
<keyword id="KW-0474">Menaquinone biosynthesis</keyword>
<keyword id="KW-0479">Metal-binding</keyword>
<keyword id="KW-1185">Reference proteome</keyword>
<keyword id="KW-0786">Thiamine pyrophosphate</keyword>
<keyword id="KW-0808">Transferase</keyword>
<proteinExistence type="inferred from homology"/>
<name>MEND_LACLA</name>
<accession>Q9CHK0</accession>
<comment type="function">
    <text evidence="1">Catalyzes the thiamine diphosphate-dependent decarboxylation of 2-oxoglutarate and the subsequent addition of the resulting succinic semialdehyde-thiamine pyrophosphate anion to isochorismate to yield 2-succinyl-5-enolpyruvyl-6-hydroxy-3-cyclohexene-1-carboxylate (SEPHCHC).</text>
</comment>
<comment type="catalytic activity">
    <reaction evidence="1">
        <text>isochorismate + 2-oxoglutarate + H(+) = 5-enolpyruvoyl-6-hydroxy-2-succinyl-cyclohex-3-ene-1-carboxylate + CO2</text>
        <dbReference type="Rhea" id="RHEA:25593"/>
        <dbReference type="ChEBI" id="CHEBI:15378"/>
        <dbReference type="ChEBI" id="CHEBI:16526"/>
        <dbReference type="ChEBI" id="CHEBI:16810"/>
        <dbReference type="ChEBI" id="CHEBI:29780"/>
        <dbReference type="ChEBI" id="CHEBI:58818"/>
        <dbReference type="EC" id="2.2.1.9"/>
    </reaction>
</comment>
<comment type="cofactor">
    <cofactor evidence="1">
        <name>Mg(2+)</name>
        <dbReference type="ChEBI" id="CHEBI:18420"/>
    </cofactor>
    <cofactor evidence="1">
        <name>Mn(2+)</name>
        <dbReference type="ChEBI" id="CHEBI:29035"/>
    </cofactor>
</comment>
<comment type="cofactor">
    <cofactor evidence="1">
        <name>thiamine diphosphate</name>
        <dbReference type="ChEBI" id="CHEBI:58937"/>
    </cofactor>
    <text evidence="1">Binds 1 thiamine pyrophosphate per subunit.</text>
</comment>
<comment type="pathway">
    <text evidence="1">Quinol/quinone metabolism; 1,4-dihydroxy-2-naphthoate biosynthesis; 1,4-dihydroxy-2-naphthoate from chorismate: step 2/7.</text>
</comment>
<comment type="pathway">
    <text evidence="1">Quinol/quinone metabolism; menaquinone biosynthesis.</text>
</comment>
<comment type="subunit">
    <text evidence="1">Homodimer.</text>
</comment>
<comment type="similarity">
    <text evidence="1">Belongs to the TPP enzyme family. MenD subfamily.</text>
</comment>
<reference key="1">
    <citation type="journal article" date="2001" name="Genome Res.">
        <title>The complete genome sequence of the lactic acid bacterium Lactococcus lactis ssp. lactis IL1403.</title>
        <authorList>
            <person name="Bolotin A."/>
            <person name="Wincker P."/>
            <person name="Mauger S."/>
            <person name="Jaillon O."/>
            <person name="Malarme K."/>
            <person name="Weissenbach J."/>
            <person name="Ehrlich S.D."/>
            <person name="Sorokin A."/>
        </authorList>
    </citation>
    <scope>NUCLEOTIDE SEQUENCE [LARGE SCALE GENOMIC DNA]</scope>
    <source>
        <strain>IL1403</strain>
    </source>
</reference>
<organism>
    <name type="scientific">Lactococcus lactis subsp. lactis (strain IL1403)</name>
    <name type="common">Streptococcus lactis</name>
    <dbReference type="NCBI Taxonomy" id="272623"/>
    <lineage>
        <taxon>Bacteria</taxon>
        <taxon>Bacillati</taxon>
        <taxon>Bacillota</taxon>
        <taxon>Bacilli</taxon>
        <taxon>Lactobacillales</taxon>
        <taxon>Streptococcaceae</taxon>
        <taxon>Lactococcus</taxon>
    </lineage>
</organism>
<feature type="chain" id="PRO_0000341763" description="2-succinyl-5-enolpyruvyl-6-hydroxy-3-cyclohexene-1-carboxylate synthase">
    <location>
        <begin position="1"/>
        <end position="560"/>
    </location>
</feature>
<gene>
    <name evidence="1" type="primary">menD</name>
    <name type="ordered locus">LL0731</name>
    <name type="ORF">L0169</name>
</gene>
<sequence length="560" mass="62524">MTNEYLAPFVDELFNLGVREAVFSPGSRSTALAMLFEEYKKYDTYVNIDERSAAFFALGIAKAKKRPVVLVCTSGSAAAHHFPAVLEAKMSRVPLIILTADRPAELQFVGAPQTVDQTRFFGNFVNHFENLEAPHIQKQSQTENFWTYPRKVAQRAVLSAISPLSGPVQINVPLRDLLVPELKSENYEKGRSKHAFKFYEGQAQVILPFDEALLSGKTLILAGANFDKDYSEALLKLAEQLKAPILADPLSNLRNHNHPLVIDSYDAFLANNDLKTQLKADAILLFGQMPVSKRLQQFVAFNNEAEFIQVDPALDYRNPSLTTTTMVQSDVLPFASSIKKVNSDSSYLEKWQNAQEKMRQLLEKVTYEESPFEGRYVQELQKHLEALDAQLLVSNSMEIRDIDYWWKKADAKVRILGNRGVNGIDGTESTALGIATTGKPTVLLTGDLSMLHDLNGLIVGKTHELNLTIVLFNNDGGGIFHHLAQKGVPNFDYLFSTPHGLNFAGLAELTGLDYHLVSGYADFGQQFEASLHQSGIHLLEIKTDKDLSLALHQKYTTYEN</sequence>
<evidence type="ECO:0000255" key="1">
    <source>
        <dbReference type="HAMAP-Rule" id="MF_01659"/>
    </source>
</evidence>